<sequence length="192" mass="20914">MELLGQKVKEDGVVIDEKILKVDGFLNHQIDAKLMNEVGRTFYEQFKDKGITKILTIEASGIAPAIMAALHFDVPCLFAKKAKPSTLTDGYYETSIHSFTKNKTSTVIVSKEFLSEEDTVLIIDDFLANGDASLGLYDITQQANAKTAGIGIVVEKSFQNGHQRLEEAGLTVSSLCKVASLEGNKVTLVGEE</sequence>
<accession>Q2YVL8</accession>
<evidence type="ECO:0000255" key="1">
    <source>
        <dbReference type="HAMAP-Rule" id="MF_01184"/>
    </source>
</evidence>
<proteinExistence type="inferred from homology"/>
<dbReference type="EC" id="2.4.2.22" evidence="1"/>
<dbReference type="EMBL" id="AJ938182">
    <property type="protein sequence ID" value="CAI80026.1"/>
    <property type="molecule type" value="Genomic_DNA"/>
</dbReference>
<dbReference type="RefSeq" id="WP_000421413.1">
    <property type="nucleotide sequence ID" value="NC_007622.1"/>
</dbReference>
<dbReference type="SMR" id="Q2YVL8"/>
<dbReference type="KEGG" id="sab:SAB0338"/>
<dbReference type="HOGENOM" id="CLU_099015_0_0_9"/>
<dbReference type="UniPathway" id="UPA00602">
    <property type="reaction ID" value="UER00658"/>
</dbReference>
<dbReference type="GO" id="GO:0005737">
    <property type="term" value="C:cytoplasm"/>
    <property type="evidence" value="ECO:0007669"/>
    <property type="project" value="UniProtKB-SubCell"/>
</dbReference>
<dbReference type="GO" id="GO:0000310">
    <property type="term" value="F:xanthine phosphoribosyltransferase activity"/>
    <property type="evidence" value="ECO:0007669"/>
    <property type="project" value="UniProtKB-UniRule"/>
</dbReference>
<dbReference type="GO" id="GO:0006166">
    <property type="term" value="P:purine ribonucleoside salvage"/>
    <property type="evidence" value="ECO:0007669"/>
    <property type="project" value="UniProtKB-KW"/>
</dbReference>
<dbReference type="GO" id="GO:0046110">
    <property type="term" value="P:xanthine metabolic process"/>
    <property type="evidence" value="ECO:0007669"/>
    <property type="project" value="InterPro"/>
</dbReference>
<dbReference type="GO" id="GO:0032265">
    <property type="term" value="P:XMP salvage"/>
    <property type="evidence" value="ECO:0007669"/>
    <property type="project" value="UniProtKB-UniRule"/>
</dbReference>
<dbReference type="CDD" id="cd06223">
    <property type="entry name" value="PRTases_typeI"/>
    <property type="match status" value="1"/>
</dbReference>
<dbReference type="Gene3D" id="3.40.50.2020">
    <property type="match status" value="1"/>
</dbReference>
<dbReference type="HAMAP" id="MF_01184">
    <property type="entry name" value="XPRTase"/>
    <property type="match status" value="1"/>
</dbReference>
<dbReference type="InterPro" id="IPR000836">
    <property type="entry name" value="PRibTrfase_dom"/>
</dbReference>
<dbReference type="InterPro" id="IPR029057">
    <property type="entry name" value="PRTase-like"/>
</dbReference>
<dbReference type="InterPro" id="IPR050118">
    <property type="entry name" value="Pur/Pyrimidine_PRTase"/>
</dbReference>
<dbReference type="InterPro" id="IPR010079">
    <property type="entry name" value="Xanthine_PRibTrfase"/>
</dbReference>
<dbReference type="NCBIfam" id="NF006671">
    <property type="entry name" value="PRK09219.1"/>
    <property type="match status" value="1"/>
</dbReference>
<dbReference type="NCBIfam" id="TIGR01744">
    <property type="entry name" value="XPRTase"/>
    <property type="match status" value="1"/>
</dbReference>
<dbReference type="PANTHER" id="PTHR43864">
    <property type="entry name" value="HYPOXANTHINE/GUANINE PHOSPHORIBOSYLTRANSFERASE"/>
    <property type="match status" value="1"/>
</dbReference>
<dbReference type="PANTHER" id="PTHR43864:SF1">
    <property type="entry name" value="XANTHINE PHOSPHORIBOSYLTRANSFERASE"/>
    <property type="match status" value="1"/>
</dbReference>
<dbReference type="SUPFAM" id="SSF53271">
    <property type="entry name" value="PRTase-like"/>
    <property type="match status" value="1"/>
</dbReference>
<comment type="function">
    <text evidence="1">Converts the preformed base xanthine, a product of nucleic acid breakdown, to xanthosine 5'-monophosphate (XMP), so it can be reused for RNA or DNA synthesis.</text>
</comment>
<comment type="catalytic activity">
    <reaction evidence="1">
        <text>XMP + diphosphate = xanthine + 5-phospho-alpha-D-ribose 1-diphosphate</text>
        <dbReference type="Rhea" id="RHEA:10800"/>
        <dbReference type="ChEBI" id="CHEBI:17712"/>
        <dbReference type="ChEBI" id="CHEBI:33019"/>
        <dbReference type="ChEBI" id="CHEBI:57464"/>
        <dbReference type="ChEBI" id="CHEBI:58017"/>
        <dbReference type="EC" id="2.4.2.22"/>
    </reaction>
</comment>
<comment type="pathway">
    <text evidence="1">Purine metabolism; XMP biosynthesis via salvage pathway; XMP from xanthine: step 1/1.</text>
</comment>
<comment type="subunit">
    <text evidence="1">Homodimer.</text>
</comment>
<comment type="subcellular location">
    <subcellularLocation>
        <location evidence="1">Cytoplasm</location>
    </subcellularLocation>
</comment>
<comment type="similarity">
    <text evidence="1">Belongs to the purine/pyrimidine phosphoribosyltransferase family. Xpt subfamily.</text>
</comment>
<protein>
    <recommendedName>
        <fullName evidence="1">Xanthine phosphoribosyltransferase</fullName>
        <shortName evidence="1">XPRTase</shortName>
        <ecNumber evidence="1">2.4.2.22</ecNumber>
    </recommendedName>
</protein>
<name>XPT_STAAB</name>
<feature type="chain" id="PRO_0000339741" description="Xanthine phosphoribosyltransferase">
    <location>
        <begin position="1"/>
        <end position="192"/>
    </location>
</feature>
<feature type="binding site" evidence="1">
    <location>
        <position position="20"/>
    </location>
    <ligand>
        <name>xanthine</name>
        <dbReference type="ChEBI" id="CHEBI:17712"/>
    </ligand>
</feature>
<feature type="binding site" evidence="1">
    <location>
        <position position="27"/>
    </location>
    <ligand>
        <name>xanthine</name>
        <dbReference type="ChEBI" id="CHEBI:17712"/>
    </ligand>
</feature>
<feature type="binding site" evidence="1">
    <location>
        <begin position="128"/>
        <end position="132"/>
    </location>
    <ligand>
        <name>5-phospho-alpha-D-ribose 1-diphosphate</name>
        <dbReference type="ChEBI" id="CHEBI:58017"/>
    </ligand>
</feature>
<feature type="binding site" evidence="1">
    <location>
        <position position="156"/>
    </location>
    <ligand>
        <name>xanthine</name>
        <dbReference type="ChEBI" id="CHEBI:17712"/>
    </ligand>
</feature>
<gene>
    <name evidence="1" type="primary">xpt</name>
    <name type="ordered locus">SAB0338</name>
</gene>
<reference key="1">
    <citation type="journal article" date="2007" name="PLoS ONE">
        <title>Molecular correlates of host specialization in Staphylococcus aureus.</title>
        <authorList>
            <person name="Herron-Olson L."/>
            <person name="Fitzgerald J.R."/>
            <person name="Musser J.M."/>
            <person name="Kapur V."/>
        </authorList>
    </citation>
    <scope>NUCLEOTIDE SEQUENCE [LARGE SCALE GENOMIC DNA]</scope>
    <source>
        <strain>bovine RF122 / ET3-1</strain>
    </source>
</reference>
<keyword id="KW-0963">Cytoplasm</keyword>
<keyword id="KW-0328">Glycosyltransferase</keyword>
<keyword id="KW-0660">Purine salvage</keyword>
<keyword id="KW-0808">Transferase</keyword>
<organism>
    <name type="scientific">Staphylococcus aureus (strain bovine RF122 / ET3-1)</name>
    <dbReference type="NCBI Taxonomy" id="273036"/>
    <lineage>
        <taxon>Bacteria</taxon>
        <taxon>Bacillati</taxon>
        <taxon>Bacillota</taxon>
        <taxon>Bacilli</taxon>
        <taxon>Bacillales</taxon>
        <taxon>Staphylococcaceae</taxon>
        <taxon>Staphylococcus</taxon>
    </lineage>
</organism>